<name>CC14C_HUMAN</name>
<feature type="chain" id="PRO_0000315822" description="Dual specificity protein phosphatase CDC14C">
    <location>
        <begin position="1"/>
        <end position="447"/>
    </location>
</feature>
<feature type="transmembrane region" description="Helical" evidence="2">
    <location>
        <begin position="426"/>
        <end position="446"/>
    </location>
</feature>
<feature type="domain" description="Tyrosine-protein phosphatase" evidence="3">
    <location>
        <begin position="184"/>
        <end position="344"/>
    </location>
</feature>
<feature type="region of interest" description="A" evidence="1">
    <location>
        <begin position="14"/>
        <end position="168"/>
    </location>
</feature>
<feature type="region of interest" description="Linker" evidence="1">
    <location>
        <begin position="169"/>
        <end position="182"/>
    </location>
</feature>
<feature type="region of interest" description="B" evidence="1">
    <location>
        <begin position="183"/>
        <end position="349"/>
    </location>
</feature>
<feature type="active site" description="Phosphocysteine intermediate" evidence="3">
    <location>
        <position position="284"/>
    </location>
</feature>
<feature type="sequence variant" id="VAR_038327" description="In dbSNP:rs1615556.">
    <original>P</original>
    <variation>S</variation>
    <location>
        <position position="131"/>
    </location>
</feature>
<feature type="sequence variant" id="VAR_038328" description="In dbSNP:rs421206.">
    <original>I</original>
    <variation>L</variation>
    <location>
        <position position="189"/>
    </location>
</feature>
<feature type="sequence conflict" description="In Ref. 2; EAL23906." evidence="7" ref="2">
    <original>R</original>
    <variation>W</variation>
    <location>
        <position position="12"/>
    </location>
</feature>
<feature type="sequence conflict" description="In Ref. 3; BC028690 and 2; EAL23906." evidence="7" ref="3 2">
    <original>V</original>
    <variation>L</variation>
    <location>
        <position position="20"/>
    </location>
</feature>
<feature type="sequence conflict" description="In Ref. 2; EAL23906." evidence="7" ref="2">
    <original>R</original>
    <variation>K</variation>
    <location>
        <position position="347"/>
    </location>
</feature>
<feature type="sequence conflict" description="In Ref. 3; BC068452, 4; ABB92421 and 2; EAL23906." evidence="7" ref="3 4 2">
    <original>S</original>
    <variation>G</variation>
    <location>
        <position position="387"/>
    </location>
</feature>
<accession>A4D256</accession>
<accession>Q2VIP7</accession>
<accession>Q6NUS3</accession>
<accession>Q8NCT2</accession>
<reference key="1">
    <citation type="journal article" date="2003" name="Nature">
        <title>The DNA sequence of human chromosome 7.</title>
        <authorList>
            <person name="Hillier L.W."/>
            <person name="Fulton R.S."/>
            <person name="Fulton L.A."/>
            <person name="Graves T.A."/>
            <person name="Pepin K.H."/>
            <person name="Wagner-McPherson C."/>
            <person name="Layman D."/>
            <person name="Maas J."/>
            <person name="Jaeger S."/>
            <person name="Walker R."/>
            <person name="Wylie K."/>
            <person name="Sekhon M."/>
            <person name="Becker M.C."/>
            <person name="O'Laughlin M.D."/>
            <person name="Schaller M.E."/>
            <person name="Fewell G.A."/>
            <person name="Delehaunty K.D."/>
            <person name="Miner T.L."/>
            <person name="Nash W.E."/>
            <person name="Cordes M."/>
            <person name="Du H."/>
            <person name="Sun H."/>
            <person name="Edwards J."/>
            <person name="Bradshaw-Cordum H."/>
            <person name="Ali J."/>
            <person name="Andrews S."/>
            <person name="Isak A."/>
            <person name="Vanbrunt A."/>
            <person name="Nguyen C."/>
            <person name="Du F."/>
            <person name="Lamar B."/>
            <person name="Courtney L."/>
            <person name="Kalicki J."/>
            <person name="Ozersky P."/>
            <person name="Bielicki L."/>
            <person name="Scott K."/>
            <person name="Holmes A."/>
            <person name="Harkins R."/>
            <person name="Harris A."/>
            <person name="Strong C.M."/>
            <person name="Hou S."/>
            <person name="Tomlinson C."/>
            <person name="Dauphin-Kohlberg S."/>
            <person name="Kozlowicz-Reilly A."/>
            <person name="Leonard S."/>
            <person name="Rohlfing T."/>
            <person name="Rock S.M."/>
            <person name="Tin-Wollam A.-M."/>
            <person name="Abbott A."/>
            <person name="Minx P."/>
            <person name="Maupin R."/>
            <person name="Strowmatt C."/>
            <person name="Latreille P."/>
            <person name="Miller N."/>
            <person name="Johnson D."/>
            <person name="Murray J."/>
            <person name="Woessner J.P."/>
            <person name="Wendl M.C."/>
            <person name="Yang S.-P."/>
            <person name="Schultz B.R."/>
            <person name="Wallis J.W."/>
            <person name="Spieth J."/>
            <person name="Bieri T.A."/>
            <person name="Nelson J.O."/>
            <person name="Berkowicz N."/>
            <person name="Wohldmann P.E."/>
            <person name="Cook L.L."/>
            <person name="Hickenbotham M.T."/>
            <person name="Eldred J."/>
            <person name="Williams D."/>
            <person name="Bedell J.A."/>
            <person name="Mardis E.R."/>
            <person name="Clifton S.W."/>
            <person name="Chissoe S.L."/>
            <person name="Marra M.A."/>
            <person name="Raymond C."/>
            <person name="Haugen E."/>
            <person name="Gillett W."/>
            <person name="Zhou Y."/>
            <person name="James R."/>
            <person name="Phelps K."/>
            <person name="Iadanoto S."/>
            <person name="Bubb K."/>
            <person name="Simms E."/>
            <person name="Levy R."/>
            <person name="Clendenning J."/>
            <person name="Kaul R."/>
            <person name="Kent W.J."/>
            <person name="Furey T.S."/>
            <person name="Baertsch R.A."/>
            <person name="Brent M.R."/>
            <person name="Keibler E."/>
            <person name="Flicek P."/>
            <person name="Bork P."/>
            <person name="Suyama M."/>
            <person name="Bailey J.A."/>
            <person name="Portnoy M.E."/>
            <person name="Torrents D."/>
            <person name="Chinwalla A.T."/>
            <person name="Gish W.R."/>
            <person name="Eddy S.R."/>
            <person name="McPherson J.D."/>
            <person name="Olson M.V."/>
            <person name="Eichler E.E."/>
            <person name="Green E.D."/>
            <person name="Waterston R.H."/>
            <person name="Wilson R.K."/>
        </authorList>
    </citation>
    <scope>NUCLEOTIDE SEQUENCE [LARGE SCALE GENOMIC DNA]</scope>
</reference>
<reference key="2">
    <citation type="journal article" date="2003" name="Science">
        <title>Human chromosome 7: DNA sequence and biology.</title>
        <authorList>
            <person name="Scherer S.W."/>
            <person name="Cheung J."/>
            <person name="MacDonald J.R."/>
            <person name="Osborne L.R."/>
            <person name="Nakabayashi K."/>
            <person name="Herbrick J.-A."/>
            <person name="Carson A.R."/>
            <person name="Parker-Katiraee L."/>
            <person name="Skaug J."/>
            <person name="Khaja R."/>
            <person name="Zhang J."/>
            <person name="Hudek A.K."/>
            <person name="Li M."/>
            <person name="Haddad M."/>
            <person name="Duggan G.E."/>
            <person name="Fernandez B.A."/>
            <person name="Kanematsu E."/>
            <person name="Gentles S."/>
            <person name="Christopoulos C.C."/>
            <person name="Choufani S."/>
            <person name="Kwasnicka D."/>
            <person name="Zheng X.H."/>
            <person name="Lai Z."/>
            <person name="Nusskern D.R."/>
            <person name="Zhang Q."/>
            <person name="Gu Z."/>
            <person name="Lu F."/>
            <person name="Zeesman S."/>
            <person name="Nowaczyk M.J."/>
            <person name="Teshima I."/>
            <person name="Chitayat D."/>
            <person name="Shuman C."/>
            <person name="Weksberg R."/>
            <person name="Zackai E.H."/>
            <person name="Grebe T.A."/>
            <person name="Cox S.R."/>
            <person name="Kirkpatrick S.J."/>
            <person name="Rahman N."/>
            <person name="Friedman J.M."/>
            <person name="Heng H.H.Q."/>
            <person name="Pelicci P.G."/>
            <person name="Lo-Coco F."/>
            <person name="Belloni E."/>
            <person name="Shaffer L.G."/>
            <person name="Pober B."/>
            <person name="Morton C.C."/>
            <person name="Gusella J.F."/>
            <person name="Bruns G.A.P."/>
            <person name="Korf B.R."/>
            <person name="Quade B.J."/>
            <person name="Ligon A.H."/>
            <person name="Ferguson H."/>
            <person name="Higgins A.W."/>
            <person name="Leach N.T."/>
            <person name="Herrick S.R."/>
            <person name="Lemyre E."/>
            <person name="Farra C.G."/>
            <person name="Kim H.-G."/>
            <person name="Summers A.M."/>
            <person name="Gripp K.W."/>
            <person name="Roberts W."/>
            <person name="Szatmari P."/>
            <person name="Winsor E.J.T."/>
            <person name="Grzeschik K.-H."/>
            <person name="Teebi A."/>
            <person name="Minassian B.A."/>
            <person name="Kere J."/>
            <person name="Armengol L."/>
            <person name="Pujana M.A."/>
            <person name="Estivill X."/>
            <person name="Wilson M.D."/>
            <person name="Koop B.F."/>
            <person name="Tosi S."/>
            <person name="Moore G.E."/>
            <person name="Boright A.P."/>
            <person name="Zlotorynski E."/>
            <person name="Kerem B."/>
            <person name="Kroisel P.M."/>
            <person name="Petek E."/>
            <person name="Oscier D.G."/>
            <person name="Mould S.J."/>
            <person name="Doehner H."/>
            <person name="Doehner K."/>
            <person name="Rommens J.M."/>
            <person name="Vincent J.B."/>
            <person name="Venter J.C."/>
            <person name="Li P.W."/>
            <person name="Mural R.J."/>
            <person name="Adams M.D."/>
            <person name="Tsui L.-C."/>
        </authorList>
    </citation>
    <scope>NUCLEOTIDE SEQUENCE [LARGE SCALE GENOMIC DNA]</scope>
</reference>
<reference key="3">
    <citation type="journal article" date="2004" name="Genome Res.">
        <title>The status, quality, and expansion of the NIH full-length cDNA project: the Mammalian Gene Collection (MGC).</title>
        <authorList>
            <consortium name="The MGC Project Team"/>
        </authorList>
    </citation>
    <scope>NUCLEOTIDE SEQUENCE [LARGE SCALE MRNA]</scope>
    <source>
        <tissue>Testis</tissue>
    </source>
</reference>
<reference key="4">
    <citation type="journal article" date="2005" name="PLoS Biol.">
        <title>Emergence of young human genes after a burst of retroposition in primates.</title>
        <authorList>
            <person name="Marques A.C."/>
            <person name="Dupanloup I."/>
            <person name="Vinckenbosch N."/>
            <person name="Reymond A."/>
            <person name="Kaessmann H."/>
        </authorList>
    </citation>
    <scope>NUCLEOTIDE SEQUENCE [GENOMIC DNA] OF 1-429</scope>
</reference>
<reference key="5">
    <citation type="journal article" date="2008" name="PLoS Biol.">
        <title>Birth and rapid subcellular adaptation of a hominoid-specific CDC14 protein.</title>
        <authorList>
            <person name="Rosso L."/>
            <person name="Marques A.C."/>
            <person name="Weier M."/>
            <person name="Lambert N."/>
            <person name="Lambot M.A."/>
            <person name="Vanderhaeghen P."/>
            <person name="Kaessmann H."/>
        </authorList>
    </citation>
    <scope>SUBCELLULAR LOCATION</scope>
</reference>
<comment type="function">
    <text evidence="1">Dual-specificity phosphatase. Preferentially dephosphorylates proteins modified by proline-directed kinases (By similarity).</text>
</comment>
<comment type="catalytic activity">
    <reaction evidence="4">
        <text>O-phospho-L-tyrosyl-[protein] + H2O = L-tyrosyl-[protein] + phosphate</text>
        <dbReference type="Rhea" id="RHEA:10684"/>
        <dbReference type="Rhea" id="RHEA-COMP:10136"/>
        <dbReference type="Rhea" id="RHEA-COMP:20101"/>
        <dbReference type="ChEBI" id="CHEBI:15377"/>
        <dbReference type="ChEBI" id="CHEBI:43474"/>
        <dbReference type="ChEBI" id="CHEBI:46858"/>
        <dbReference type="ChEBI" id="CHEBI:61978"/>
        <dbReference type="EC" id="3.1.3.48"/>
    </reaction>
</comment>
<comment type="catalytic activity">
    <reaction>
        <text>O-phospho-L-seryl-[protein] + H2O = L-seryl-[protein] + phosphate</text>
        <dbReference type="Rhea" id="RHEA:20629"/>
        <dbReference type="Rhea" id="RHEA-COMP:9863"/>
        <dbReference type="Rhea" id="RHEA-COMP:11604"/>
        <dbReference type="ChEBI" id="CHEBI:15377"/>
        <dbReference type="ChEBI" id="CHEBI:29999"/>
        <dbReference type="ChEBI" id="CHEBI:43474"/>
        <dbReference type="ChEBI" id="CHEBI:83421"/>
        <dbReference type="EC" id="3.1.3.16"/>
    </reaction>
</comment>
<comment type="catalytic activity">
    <reaction>
        <text>O-phospho-L-threonyl-[protein] + H2O = L-threonyl-[protein] + phosphate</text>
        <dbReference type="Rhea" id="RHEA:47004"/>
        <dbReference type="Rhea" id="RHEA-COMP:11060"/>
        <dbReference type="Rhea" id="RHEA-COMP:11605"/>
        <dbReference type="ChEBI" id="CHEBI:15377"/>
        <dbReference type="ChEBI" id="CHEBI:30013"/>
        <dbReference type="ChEBI" id="CHEBI:43474"/>
        <dbReference type="ChEBI" id="CHEBI:61977"/>
        <dbReference type="EC" id="3.1.3.16"/>
    </reaction>
</comment>
<comment type="subcellular location">
    <subcellularLocation>
        <location evidence="5">Endoplasmic reticulum membrane</location>
        <topology evidence="2">Single-pass membrane protein</topology>
    </subcellularLocation>
    <text evidence="5">Retains its endoplasmic reticulum localization during mitosis.</text>
</comment>
<comment type="domain">
    <text>Composed of two structurally equivalent A and B domains that adopt a dual specificity protein phosphatase (DSP) fold.</text>
</comment>
<comment type="miscellaneous">
    <text>May act as an autosomal functional substitute.</text>
</comment>
<comment type="similarity">
    <text evidence="7">Belongs to the protein-tyrosine phosphatase family. Non-receptor class CDC14 subfamily.</text>
</comment>
<comment type="sequence caution" evidence="7">
    <conflict type="erroneous initiation">
        <sequence resource="EMBL-CDS" id="ABB92421"/>
    </conflict>
    <text>Extended N-terminus.</text>
</comment>
<comment type="sequence caution" evidence="7">
    <conflict type="erroneous gene model prediction">
        <sequence resource="EMBL-CDS" id="EAL23906"/>
    </conflict>
</comment>
<gene>
    <name evidence="8" type="primary">CDC14C</name>
    <name evidence="6" type="synonym">CDC14B2</name>
    <name type="synonym">CDC14Bretro</name>
</gene>
<sequence>MRSSTLQDPRRRDPQDDVYVDITDRLRFAILYSRPKSASNVHYFSIDNELEYENFSEDFGPLNLAMVYRYCCKINKKLKSITMLRKKIVHFTGSDQRKQANAAFLVGCYMVIYLGRTPEAAYRILIFGDTPYIPFRDAAYGSCNFYITLLDCFHAVKKAMQYGFLNFNSFNLDEYEHYEKAENGDLNWIIPDRFIAFCGPHSRARLESGYHQHSPETYIQYFKNHNVTTIIRLNKRMYDAKRFTDAGFDHHDLFFADGSTPTDAIVKRFLDICENAEGAIAVHCKAGLGRTGTLIACYIMKHYRMTAAETIAWVRICRPGLVIGPQQQFLVMKQTSLWLEGDYFRQRLKGQENGQHRAAFSKLLSGVDDISINGVENQDQQEPKPYSDDDEINGVTQGDRSRALKRRRQSKTNDILLPSPLAVLTFTLCSVVIWWIVCDYILPILLF</sequence>
<proteinExistence type="evidence at protein level"/>
<dbReference type="EC" id="3.1.3.16"/>
<dbReference type="EC" id="3.1.3.48"/>
<dbReference type="EMBL" id="AC006024">
    <property type="status" value="NOT_ANNOTATED_CDS"/>
    <property type="molecule type" value="Genomic_DNA"/>
</dbReference>
<dbReference type="EMBL" id="CH236955">
    <property type="protein sequence ID" value="EAL23906.1"/>
    <property type="status" value="ALT_SEQ"/>
    <property type="molecule type" value="Genomic_DNA"/>
</dbReference>
<dbReference type="EMBL" id="BC028690">
    <property type="status" value="NOT_ANNOTATED_CDS"/>
    <property type="molecule type" value="mRNA"/>
</dbReference>
<dbReference type="EMBL" id="BC068452">
    <property type="status" value="NOT_ANNOTATED_CDS"/>
    <property type="molecule type" value="mRNA"/>
</dbReference>
<dbReference type="EMBL" id="DQ120635">
    <property type="protein sequence ID" value="ABB92421.1"/>
    <property type="status" value="ALT_INIT"/>
    <property type="molecule type" value="Genomic_DNA"/>
</dbReference>
<dbReference type="CCDS" id="CCDS94101.1"/>
<dbReference type="SMR" id="A4D256"/>
<dbReference type="FunCoup" id="A4D256">
    <property type="interactions" value="60"/>
</dbReference>
<dbReference type="IntAct" id="A4D256">
    <property type="interactions" value="1"/>
</dbReference>
<dbReference type="MINT" id="A4D256"/>
<dbReference type="STRING" id="9606.ENSP00000497679"/>
<dbReference type="DEPOD" id="CDC14C"/>
<dbReference type="GlyGen" id="A4D256">
    <property type="glycosylation" value="1 site, 1 O-linked glycan (1 site)"/>
</dbReference>
<dbReference type="iPTMnet" id="A4D256"/>
<dbReference type="PhosphoSitePlus" id="A4D256"/>
<dbReference type="BioMuta" id="HGNC:22427"/>
<dbReference type="jPOST" id="A4D256"/>
<dbReference type="MassIVE" id="A4D256"/>
<dbReference type="PeptideAtlas" id="A4D256"/>
<dbReference type="ProteomicsDB" id="639"/>
<dbReference type="Antibodypedia" id="82404">
    <property type="antibodies" value="2 antibodies from 2 providers"/>
</dbReference>
<dbReference type="Ensembl" id="ENST00000650262.2">
    <property type="protein sequence ID" value="ENSP00000497792.1"/>
    <property type="gene ID" value="ENSG00000218305.5"/>
</dbReference>
<dbReference type="MANE-Select" id="ENST00000650262.2">
    <property type="protein sequence ID" value="ENSP00000497792.1"/>
    <property type="RefSeq nucleotide sequence ID" value="NM_152627.3"/>
    <property type="RefSeq protein sequence ID" value="NP_689840.2"/>
</dbReference>
<dbReference type="AGR" id="HGNC:22427"/>
<dbReference type="GeneCards" id="CDC14C"/>
<dbReference type="HGNC" id="HGNC:22427">
    <property type="gene designation" value="CDC14C"/>
</dbReference>
<dbReference type="HPA" id="ENSG00000218305">
    <property type="expression patterns" value="Group enriched (retina, testis)"/>
</dbReference>
<dbReference type="neXtProt" id="NX_A4D256"/>
<dbReference type="VEuPathDB" id="HostDB:ENSG00000218305"/>
<dbReference type="GeneTree" id="ENSGT00940000155950"/>
<dbReference type="InParanoid" id="A4D256"/>
<dbReference type="OMA" id="DCFRQKL"/>
<dbReference type="OrthoDB" id="266663at2759"/>
<dbReference type="PAN-GO" id="A4D256">
    <property type="GO annotations" value="11 GO annotations based on evolutionary models"/>
</dbReference>
<dbReference type="PhylomeDB" id="A4D256"/>
<dbReference type="PathwayCommons" id="A4D256"/>
<dbReference type="ChiTaRS" id="CDC14C">
    <property type="organism name" value="human"/>
</dbReference>
<dbReference type="Pharos" id="A4D256">
    <property type="development level" value="Tdark"/>
</dbReference>
<dbReference type="PRO" id="PR:A4D256"/>
<dbReference type="Proteomes" id="UP000005640">
    <property type="component" value="Chromosome 7"/>
</dbReference>
<dbReference type="RNAct" id="A4D256">
    <property type="molecule type" value="protein"/>
</dbReference>
<dbReference type="Bgee" id="ENSG00000218305">
    <property type="expression patterns" value="Expressed in male germ line stem cell (sensu Vertebrata) in testis and 15 other cell types or tissues"/>
</dbReference>
<dbReference type="ExpressionAtlas" id="A4D256">
    <property type="expression patterns" value="baseline and differential"/>
</dbReference>
<dbReference type="GO" id="GO:0005737">
    <property type="term" value="C:cytoplasm"/>
    <property type="evidence" value="ECO:0000318"/>
    <property type="project" value="GO_Central"/>
</dbReference>
<dbReference type="GO" id="GO:0005789">
    <property type="term" value="C:endoplasmic reticulum membrane"/>
    <property type="evidence" value="ECO:0007669"/>
    <property type="project" value="UniProtKB-SubCell"/>
</dbReference>
<dbReference type="GO" id="GO:0072686">
    <property type="term" value="C:mitotic spindle"/>
    <property type="evidence" value="ECO:0000318"/>
    <property type="project" value="GO_Central"/>
</dbReference>
<dbReference type="GO" id="GO:0005730">
    <property type="term" value="C:nucleolus"/>
    <property type="evidence" value="ECO:0000318"/>
    <property type="project" value="GO_Central"/>
</dbReference>
<dbReference type="GO" id="GO:0000922">
    <property type="term" value="C:spindle pole"/>
    <property type="evidence" value="ECO:0000318"/>
    <property type="project" value="GO_Central"/>
</dbReference>
<dbReference type="GO" id="GO:0004722">
    <property type="term" value="F:protein serine/threonine phosphatase activity"/>
    <property type="evidence" value="ECO:0000318"/>
    <property type="project" value="GO_Central"/>
</dbReference>
<dbReference type="GO" id="GO:0004725">
    <property type="term" value="F:protein tyrosine phosphatase activity"/>
    <property type="evidence" value="ECO:0000318"/>
    <property type="project" value="GO_Central"/>
</dbReference>
<dbReference type="GO" id="GO:0060271">
    <property type="term" value="P:cilium assembly"/>
    <property type="evidence" value="ECO:0000318"/>
    <property type="project" value="GO_Central"/>
</dbReference>
<dbReference type="GO" id="GO:0000226">
    <property type="term" value="P:microtubule cytoskeleton organization"/>
    <property type="evidence" value="ECO:0000318"/>
    <property type="project" value="GO_Central"/>
</dbReference>
<dbReference type="GO" id="GO:0032467">
    <property type="term" value="P:positive regulation of cytokinesis"/>
    <property type="evidence" value="ECO:0000318"/>
    <property type="project" value="GO_Central"/>
</dbReference>
<dbReference type="GO" id="GO:0007096">
    <property type="term" value="P:regulation of exit from mitosis"/>
    <property type="evidence" value="ECO:0000318"/>
    <property type="project" value="GO_Central"/>
</dbReference>
<dbReference type="CDD" id="cd14499">
    <property type="entry name" value="CDC14_C"/>
    <property type="match status" value="1"/>
</dbReference>
<dbReference type="CDD" id="cd17657">
    <property type="entry name" value="CDC14_N"/>
    <property type="match status" value="1"/>
</dbReference>
<dbReference type="FunFam" id="3.90.190.10:FF:000006">
    <property type="entry name" value="Dual specificity protein phosphatase CDC14B"/>
    <property type="match status" value="1"/>
</dbReference>
<dbReference type="FunFam" id="3.90.190.10:FF:000031">
    <property type="entry name" value="dual specificity protein phosphatase CDC14B isoform X1"/>
    <property type="match status" value="1"/>
</dbReference>
<dbReference type="Gene3D" id="3.90.190.10">
    <property type="entry name" value="Protein tyrosine phosphatase superfamily"/>
    <property type="match status" value="2"/>
</dbReference>
<dbReference type="InterPro" id="IPR044506">
    <property type="entry name" value="CDC14_C"/>
</dbReference>
<dbReference type="InterPro" id="IPR029260">
    <property type="entry name" value="DSPn"/>
</dbReference>
<dbReference type="InterPro" id="IPR029021">
    <property type="entry name" value="Prot-tyrosine_phosphatase-like"/>
</dbReference>
<dbReference type="InterPro" id="IPR050561">
    <property type="entry name" value="PTP"/>
</dbReference>
<dbReference type="InterPro" id="IPR016130">
    <property type="entry name" value="Tyr_Pase_AS"/>
</dbReference>
<dbReference type="InterPro" id="IPR003595">
    <property type="entry name" value="Tyr_Pase_cat"/>
</dbReference>
<dbReference type="InterPro" id="IPR000387">
    <property type="entry name" value="Tyr_Pase_dom"/>
</dbReference>
<dbReference type="InterPro" id="IPR020422">
    <property type="entry name" value="TYR_PHOSPHATASE_DUAL_dom"/>
</dbReference>
<dbReference type="PANTHER" id="PTHR23339">
    <property type="entry name" value="TYROSINE SPECIFIC PROTEIN PHOSPHATASE AND DUAL SPECIFICITY PROTEIN PHOSPHATASE"/>
    <property type="match status" value="1"/>
</dbReference>
<dbReference type="Pfam" id="PF14671">
    <property type="entry name" value="DSPn"/>
    <property type="match status" value="1"/>
</dbReference>
<dbReference type="Pfam" id="PF22785">
    <property type="entry name" value="Tc-R-P"/>
    <property type="match status" value="1"/>
</dbReference>
<dbReference type="SMART" id="SM00195">
    <property type="entry name" value="DSPc"/>
    <property type="match status" value="1"/>
</dbReference>
<dbReference type="SMART" id="SM00404">
    <property type="entry name" value="PTPc_motif"/>
    <property type="match status" value="1"/>
</dbReference>
<dbReference type="SUPFAM" id="SSF52799">
    <property type="entry name" value="(Phosphotyrosine protein) phosphatases II"/>
    <property type="match status" value="2"/>
</dbReference>
<dbReference type="PROSITE" id="PS00383">
    <property type="entry name" value="TYR_PHOSPHATASE_1"/>
    <property type="match status" value="1"/>
</dbReference>
<dbReference type="PROSITE" id="PS50056">
    <property type="entry name" value="TYR_PHOSPHATASE_2"/>
    <property type="match status" value="1"/>
</dbReference>
<dbReference type="PROSITE" id="PS50054">
    <property type="entry name" value="TYR_PHOSPHATASE_DUAL"/>
    <property type="match status" value="1"/>
</dbReference>
<keyword id="KW-0256">Endoplasmic reticulum</keyword>
<keyword id="KW-0378">Hydrolase</keyword>
<keyword id="KW-0472">Membrane</keyword>
<keyword id="KW-0904">Protein phosphatase</keyword>
<keyword id="KW-1267">Proteomics identification</keyword>
<keyword id="KW-1185">Reference proteome</keyword>
<keyword id="KW-0812">Transmembrane</keyword>
<keyword id="KW-1133">Transmembrane helix</keyword>
<evidence type="ECO:0000250" key="1"/>
<evidence type="ECO:0000255" key="2"/>
<evidence type="ECO:0000255" key="3">
    <source>
        <dbReference type="PROSITE-ProRule" id="PRU00160"/>
    </source>
</evidence>
<evidence type="ECO:0000255" key="4">
    <source>
        <dbReference type="PROSITE-ProRule" id="PRU10044"/>
    </source>
</evidence>
<evidence type="ECO:0000269" key="5">
    <source>
    </source>
</evidence>
<evidence type="ECO:0000303" key="6">
    <source>
    </source>
</evidence>
<evidence type="ECO:0000305" key="7"/>
<evidence type="ECO:0000312" key="8">
    <source>
        <dbReference type="HGNC" id="HGNC:22427"/>
    </source>
</evidence>
<organism>
    <name type="scientific">Homo sapiens</name>
    <name type="common">Human</name>
    <dbReference type="NCBI Taxonomy" id="9606"/>
    <lineage>
        <taxon>Eukaryota</taxon>
        <taxon>Metazoa</taxon>
        <taxon>Chordata</taxon>
        <taxon>Craniata</taxon>
        <taxon>Vertebrata</taxon>
        <taxon>Euteleostomi</taxon>
        <taxon>Mammalia</taxon>
        <taxon>Eutheria</taxon>
        <taxon>Euarchontoglires</taxon>
        <taxon>Primates</taxon>
        <taxon>Haplorrhini</taxon>
        <taxon>Catarrhini</taxon>
        <taxon>Hominidae</taxon>
        <taxon>Homo</taxon>
    </lineage>
</organism>
<protein>
    <recommendedName>
        <fullName evidence="7">Dual specificity protein phosphatase CDC14C</fullName>
        <ecNumber>3.1.3.16</ecNumber>
        <ecNumber>3.1.3.48</ecNumber>
    </recommendedName>
    <alternativeName>
        <fullName>CDC14 cell division cycle 14 homolog C</fullName>
    </alternativeName>
</protein>